<name>ACDH_PSET1</name>
<comment type="catalytic activity">
    <reaction evidence="1">
        <text>acetaldehyde + NAD(+) + CoA = acetyl-CoA + NADH + H(+)</text>
        <dbReference type="Rhea" id="RHEA:23288"/>
        <dbReference type="ChEBI" id="CHEBI:15343"/>
        <dbReference type="ChEBI" id="CHEBI:15378"/>
        <dbReference type="ChEBI" id="CHEBI:57287"/>
        <dbReference type="ChEBI" id="CHEBI:57288"/>
        <dbReference type="ChEBI" id="CHEBI:57540"/>
        <dbReference type="ChEBI" id="CHEBI:57945"/>
        <dbReference type="EC" id="1.2.1.10"/>
    </reaction>
</comment>
<comment type="similarity">
    <text evidence="1">Belongs to the acetaldehyde dehydrogenase family.</text>
</comment>
<gene>
    <name type="primary">mhpF</name>
    <name type="ordered locus">PSHAa2142</name>
</gene>
<proteinExistence type="inferred from homology"/>
<reference key="1">
    <citation type="journal article" date="2005" name="Genome Res.">
        <title>Coping with cold: the genome of the versatile marine Antarctica bacterium Pseudoalteromonas haloplanktis TAC125.</title>
        <authorList>
            <person name="Medigue C."/>
            <person name="Krin E."/>
            <person name="Pascal G."/>
            <person name="Barbe V."/>
            <person name="Bernsel A."/>
            <person name="Bertin P.N."/>
            <person name="Cheung F."/>
            <person name="Cruveiller S."/>
            <person name="D'Amico S."/>
            <person name="Duilio A."/>
            <person name="Fang G."/>
            <person name="Feller G."/>
            <person name="Ho C."/>
            <person name="Mangenot S."/>
            <person name="Marino G."/>
            <person name="Nilsson J."/>
            <person name="Parrilli E."/>
            <person name="Rocha E.P.C."/>
            <person name="Rouy Z."/>
            <person name="Sekowska A."/>
            <person name="Tutino M.L."/>
            <person name="Vallenet D."/>
            <person name="von Heijne G."/>
            <person name="Danchin A."/>
        </authorList>
    </citation>
    <scope>NUCLEOTIDE SEQUENCE [LARGE SCALE GENOMIC DNA]</scope>
    <source>
        <strain>TAC 125</strain>
    </source>
</reference>
<accession>Q3IEN6</accession>
<dbReference type="EC" id="1.2.1.10" evidence="1"/>
<dbReference type="EMBL" id="CR954246">
    <property type="protein sequence ID" value="CAI87198.1"/>
    <property type="molecule type" value="Genomic_DNA"/>
</dbReference>
<dbReference type="SMR" id="Q3IEN6"/>
<dbReference type="STRING" id="326442.PSHAa2142"/>
<dbReference type="KEGG" id="pha:PSHAa2142"/>
<dbReference type="PATRIC" id="fig|326442.8.peg.2059"/>
<dbReference type="eggNOG" id="COG4569">
    <property type="taxonomic scope" value="Bacteria"/>
</dbReference>
<dbReference type="HOGENOM" id="CLU_062208_0_0_6"/>
<dbReference type="BioCyc" id="PHAL326442:PSHA_RS10570-MONOMER"/>
<dbReference type="Proteomes" id="UP000006843">
    <property type="component" value="Chromosome I"/>
</dbReference>
<dbReference type="GO" id="GO:0008774">
    <property type="term" value="F:acetaldehyde dehydrogenase (acetylating) activity"/>
    <property type="evidence" value="ECO:0007669"/>
    <property type="project" value="UniProtKB-UniRule"/>
</dbReference>
<dbReference type="GO" id="GO:0051287">
    <property type="term" value="F:NAD binding"/>
    <property type="evidence" value="ECO:0007669"/>
    <property type="project" value="UniProtKB-UniRule"/>
</dbReference>
<dbReference type="GO" id="GO:0009056">
    <property type="term" value="P:catabolic process"/>
    <property type="evidence" value="ECO:0007669"/>
    <property type="project" value="UniProtKB-KW"/>
</dbReference>
<dbReference type="CDD" id="cd23933">
    <property type="entry name" value="ALDH_C"/>
    <property type="match status" value="1"/>
</dbReference>
<dbReference type="Gene3D" id="3.30.360.10">
    <property type="entry name" value="Dihydrodipicolinate Reductase, domain 2"/>
    <property type="match status" value="1"/>
</dbReference>
<dbReference type="Gene3D" id="3.40.50.720">
    <property type="entry name" value="NAD(P)-binding Rossmann-like Domain"/>
    <property type="match status" value="1"/>
</dbReference>
<dbReference type="HAMAP" id="MF_01657">
    <property type="entry name" value="Ac_ald_DH_ac"/>
    <property type="match status" value="1"/>
</dbReference>
<dbReference type="InterPro" id="IPR003361">
    <property type="entry name" value="Acetaldehyde_dehydrogenase"/>
</dbReference>
<dbReference type="InterPro" id="IPR015426">
    <property type="entry name" value="Acetylaldehyde_DH_C"/>
</dbReference>
<dbReference type="InterPro" id="IPR036291">
    <property type="entry name" value="NAD(P)-bd_dom_sf"/>
</dbReference>
<dbReference type="InterPro" id="IPR000534">
    <property type="entry name" value="Semialdehyde_DH_NAD-bd"/>
</dbReference>
<dbReference type="NCBIfam" id="TIGR03215">
    <property type="entry name" value="ac_ald_DH_ac"/>
    <property type="match status" value="1"/>
</dbReference>
<dbReference type="NCBIfam" id="NF006157">
    <property type="entry name" value="PRK08300.1"/>
    <property type="match status" value="1"/>
</dbReference>
<dbReference type="Pfam" id="PF09290">
    <property type="entry name" value="AcetDehyd-dimer"/>
    <property type="match status" value="1"/>
</dbReference>
<dbReference type="PIRSF" id="PIRSF015689">
    <property type="entry name" value="Actaldh_dh_actl"/>
    <property type="match status" value="1"/>
</dbReference>
<dbReference type="SMART" id="SM00859">
    <property type="entry name" value="Semialdhyde_dh"/>
    <property type="match status" value="1"/>
</dbReference>
<dbReference type="SUPFAM" id="SSF55347">
    <property type="entry name" value="Glyceraldehyde-3-phosphate dehydrogenase-like, C-terminal domain"/>
    <property type="match status" value="1"/>
</dbReference>
<dbReference type="SUPFAM" id="SSF51735">
    <property type="entry name" value="NAD(P)-binding Rossmann-fold domains"/>
    <property type="match status" value="1"/>
</dbReference>
<protein>
    <recommendedName>
        <fullName evidence="1">Acetaldehyde dehydrogenase</fullName>
        <ecNumber evidence="1">1.2.1.10</ecNumber>
    </recommendedName>
    <alternativeName>
        <fullName evidence="1">Acetaldehyde dehydrogenase [acetylating]</fullName>
    </alternativeName>
</protein>
<evidence type="ECO:0000255" key="1">
    <source>
        <dbReference type="HAMAP-Rule" id="MF_01657"/>
    </source>
</evidence>
<keyword id="KW-0058">Aromatic hydrocarbons catabolism</keyword>
<keyword id="KW-0520">NAD</keyword>
<keyword id="KW-0560">Oxidoreductase</keyword>
<keyword id="KW-1185">Reference proteome</keyword>
<feature type="chain" id="PRO_0000387705" description="Acetaldehyde dehydrogenase">
    <location>
        <begin position="1"/>
        <end position="300"/>
    </location>
</feature>
<feature type="active site" description="Acyl-thioester intermediate" evidence="1">
    <location>
        <position position="129"/>
    </location>
</feature>
<feature type="binding site" evidence="1">
    <location>
        <begin position="11"/>
        <end position="14"/>
    </location>
    <ligand>
        <name>NAD(+)</name>
        <dbReference type="ChEBI" id="CHEBI:57540"/>
    </ligand>
</feature>
<feature type="binding site" evidence="1">
    <location>
        <begin position="160"/>
        <end position="168"/>
    </location>
    <ligand>
        <name>NAD(+)</name>
        <dbReference type="ChEBI" id="CHEBI:57540"/>
    </ligand>
</feature>
<feature type="binding site" evidence="1">
    <location>
        <position position="271"/>
    </location>
    <ligand>
        <name>NAD(+)</name>
        <dbReference type="ChEBI" id="CHEBI:57540"/>
    </ligand>
</feature>
<organism>
    <name type="scientific">Pseudoalteromonas translucida (strain TAC 125)</name>
    <dbReference type="NCBI Taxonomy" id="326442"/>
    <lineage>
        <taxon>Bacteria</taxon>
        <taxon>Pseudomonadati</taxon>
        <taxon>Pseudomonadota</taxon>
        <taxon>Gammaproteobacteria</taxon>
        <taxon>Alteromonadales</taxon>
        <taxon>Pseudoalteromonadaceae</taxon>
        <taxon>Pseudoalteromonas</taxon>
    </lineage>
</organism>
<sequence length="300" mass="31906">MKKIKCALIGSGNIGTDLLYKLKRSEILEPVWMVGIDPDSEGLARARELGIKTTADGIDGLIPHIEADEIKIAFDATSAYVHGENSAKVNAKGVLMIDLTPAAIGPFCVPPVNLNQLNADIKNVNMVTCGGQATIPMVAAVSRVQPVEYGEIVATVSSKSVGPGTRQNIDEFTRTTSGAVEQIGGAKKGKAIIIINPAEPPLLMRDTIHCLTETEPDQAAITASVHEMIAEVQKYVPGYKLKNGPVFDGRKVSIFLEVEGLGDYLPKYAGNLDIMTASAARTAEMFALQMLGQSPSDSQS</sequence>